<sequence>MGLTYQLIPVLVCLLVCTSHLVHGHKCDITLAEIIKTLNILTTRKNSCMELPVADVFAAPKNTTEKETFCRVGIELRRIYRSHTCLNKFLGGLDRNLNSLVSKTCSVNEAKTGTSTLKDLLERLKTIMKEKYSKC</sequence>
<dbReference type="EMBL" id="AY293620">
    <property type="protein sequence ID" value="AAP44996.1"/>
    <property type="molecule type" value="mRNA"/>
</dbReference>
<dbReference type="SMR" id="Q7YS71"/>
<dbReference type="GlyCosmos" id="Q7YS71">
    <property type="glycosylation" value="1 site, No reported glycans"/>
</dbReference>
<dbReference type="GO" id="GO:0005615">
    <property type="term" value="C:extracellular space"/>
    <property type="evidence" value="ECO:0007669"/>
    <property type="project" value="UniProtKB-KW"/>
</dbReference>
<dbReference type="GO" id="GO:0005125">
    <property type="term" value="F:cytokine activity"/>
    <property type="evidence" value="ECO:0007669"/>
    <property type="project" value="UniProtKB-KW"/>
</dbReference>
<dbReference type="GO" id="GO:0008083">
    <property type="term" value="F:growth factor activity"/>
    <property type="evidence" value="ECO:0007669"/>
    <property type="project" value="UniProtKB-KW"/>
</dbReference>
<dbReference type="GO" id="GO:0005136">
    <property type="term" value="F:interleukin-4 receptor binding"/>
    <property type="evidence" value="ECO:0007669"/>
    <property type="project" value="InterPro"/>
</dbReference>
<dbReference type="GO" id="GO:0042113">
    <property type="term" value="P:B cell activation"/>
    <property type="evidence" value="ECO:0007669"/>
    <property type="project" value="UniProtKB-KW"/>
</dbReference>
<dbReference type="GO" id="GO:0006955">
    <property type="term" value="P:immune response"/>
    <property type="evidence" value="ECO:0007669"/>
    <property type="project" value="InterPro"/>
</dbReference>
<dbReference type="GO" id="GO:0035771">
    <property type="term" value="P:interleukin-4-mediated signaling pathway"/>
    <property type="evidence" value="ECO:0007669"/>
    <property type="project" value="TreeGrafter"/>
</dbReference>
<dbReference type="GO" id="GO:0050728">
    <property type="term" value="P:negative regulation of inflammatory response"/>
    <property type="evidence" value="ECO:0007669"/>
    <property type="project" value="TreeGrafter"/>
</dbReference>
<dbReference type="GO" id="GO:0045893">
    <property type="term" value="P:positive regulation of DNA-templated transcription"/>
    <property type="evidence" value="ECO:0007669"/>
    <property type="project" value="TreeGrafter"/>
</dbReference>
<dbReference type="GO" id="GO:0016239">
    <property type="term" value="P:positive regulation of macroautophagy"/>
    <property type="evidence" value="ECO:0000250"/>
    <property type="project" value="UniProtKB"/>
</dbReference>
<dbReference type="GO" id="GO:0050776">
    <property type="term" value="P:regulation of immune response"/>
    <property type="evidence" value="ECO:0007669"/>
    <property type="project" value="TreeGrafter"/>
</dbReference>
<dbReference type="FunFam" id="1.20.1250.10:FF:000014">
    <property type="entry name" value="Interleukin-4"/>
    <property type="match status" value="1"/>
</dbReference>
<dbReference type="Gene3D" id="1.20.1250.10">
    <property type="match status" value="1"/>
</dbReference>
<dbReference type="InterPro" id="IPR009079">
    <property type="entry name" value="4_helix_cytokine-like_core"/>
</dbReference>
<dbReference type="InterPro" id="IPR002354">
    <property type="entry name" value="IL-4"/>
</dbReference>
<dbReference type="InterPro" id="IPR001325">
    <property type="entry name" value="IL-4/IL-13"/>
</dbReference>
<dbReference type="InterPro" id="IPR018096">
    <property type="entry name" value="IL-4/IL-13_CS"/>
</dbReference>
<dbReference type="PANTHER" id="PTHR47401">
    <property type="entry name" value="INTERLEUKIN-4"/>
    <property type="match status" value="1"/>
</dbReference>
<dbReference type="PANTHER" id="PTHR47401:SF1">
    <property type="entry name" value="INTERLEUKIN-4"/>
    <property type="match status" value="1"/>
</dbReference>
<dbReference type="Pfam" id="PF00727">
    <property type="entry name" value="IL4"/>
    <property type="match status" value="1"/>
</dbReference>
<dbReference type="PIRSF" id="PIRSF001941">
    <property type="entry name" value="Interleukin_4"/>
    <property type="match status" value="1"/>
</dbReference>
<dbReference type="PRINTS" id="PR00431">
    <property type="entry name" value="INTERLEUKIN4"/>
</dbReference>
<dbReference type="SMART" id="SM00190">
    <property type="entry name" value="IL4_13"/>
    <property type="match status" value="1"/>
</dbReference>
<dbReference type="SUPFAM" id="SSF47266">
    <property type="entry name" value="4-helical cytokines"/>
    <property type="match status" value="1"/>
</dbReference>
<dbReference type="PROSITE" id="PS00838">
    <property type="entry name" value="INTERLEUKIN_4_13"/>
    <property type="match status" value="1"/>
</dbReference>
<feature type="signal peptide" evidence="1">
    <location>
        <begin position="1"/>
        <end position="24"/>
    </location>
</feature>
<feature type="chain" id="PRO_0000015525" description="Interleukin-4">
    <location>
        <begin position="25"/>
        <end position="135"/>
    </location>
</feature>
<feature type="glycosylation site" description="N-linked (GlcNAc...) asparagine" evidence="3">
    <location>
        <position position="62"/>
    </location>
</feature>
<feature type="disulfide bond" evidence="1">
    <location>
        <begin position="27"/>
        <end position="135"/>
    </location>
</feature>
<feature type="disulfide bond" evidence="1">
    <location>
        <begin position="48"/>
        <end position="85"/>
    </location>
</feature>
<feature type="disulfide bond" evidence="1">
    <location>
        <begin position="70"/>
        <end position="105"/>
    </location>
</feature>
<keyword id="KW-0075">B-cell activation</keyword>
<keyword id="KW-0202">Cytokine</keyword>
<keyword id="KW-1015">Disulfide bond</keyword>
<keyword id="KW-0325">Glycoprotein</keyword>
<keyword id="KW-0339">Growth factor</keyword>
<keyword id="KW-0964">Secreted</keyword>
<keyword id="KW-0732">Signal</keyword>
<organism>
    <name type="scientific">Bubalus bubalis</name>
    <name type="common">Domestic water buffalo</name>
    <dbReference type="NCBI Taxonomy" id="89462"/>
    <lineage>
        <taxon>Eukaryota</taxon>
        <taxon>Metazoa</taxon>
        <taxon>Chordata</taxon>
        <taxon>Craniata</taxon>
        <taxon>Vertebrata</taxon>
        <taxon>Euteleostomi</taxon>
        <taxon>Mammalia</taxon>
        <taxon>Eutheria</taxon>
        <taxon>Laurasiatheria</taxon>
        <taxon>Artiodactyla</taxon>
        <taxon>Ruminantia</taxon>
        <taxon>Pecora</taxon>
        <taxon>Bovidae</taxon>
        <taxon>Bovinae</taxon>
        <taxon>Bubalus</taxon>
    </lineage>
</organism>
<reference key="1">
    <citation type="submission" date="2003-05" db="EMBL/GenBank/DDBJ databases">
        <title>Molecular cloning and characterization of the cDNA encoding IL-4 gene of Indian buffalo (Bubalus bubalis).</title>
        <authorList>
            <person name="Hatle K.M."/>
            <person name="Saini M."/>
            <person name="Sharma B."/>
            <person name="Joshi P."/>
            <person name="Gupta P.K."/>
        </authorList>
    </citation>
    <scope>NUCLEOTIDE SEQUENCE [MRNA]</scope>
    <source>
        <tissue>Blood</tissue>
    </source>
</reference>
<proteinExistence type="evidence at transcript level"/>
<protein>
    <recommendedName>
        <fullName>Interleukin-4</fullName>
        <shortName>IL-4</shortName>
    </recommendedName>
    <alternativeName>
        <fullName>B-cell stimulatory factor 1</fullName>
        <shortName>BSF-1</shortName>
    </alternativeName>
    <alternativeName>
        <fullName>Lymphocyte stimulatory factor 1</fullName>
    </alternativeName>
</protein>
<comment type="function">
    <text evidence="2">Participates in at least several B-cell activation processes as well as of other cell types. It is a costimulator of DNA-synthesis. It induces the expression of class II MHC molecules on resting B-cells. It enhances both secretion and cell surface expression of IgE and IgG1. It also regulates the expression of the low affinity Fc receptor for IgE (CD23) on both lymphocytes and monocytes. Positively regulates IL31RA expression in macrophages. Stimulates autophagy in dendritic cells by interfering with mTORC1 signaling and through the induction of RUFY4.</text>
</comment>
<comment type="subcellular location">
    <subcellularLocation>
        <location evidence="1">Secreted</location>
    </subcellularLocation>
</comment>
<comment type="similarity">
    <text evidence="4">Belongs to the IL-4/IL-13 family.</text>
</comment>
<gene>
    <name type="primary">IL4</name>
</gene>
<name>IL4_BUBBU</name>
<accession>Q7YS71</accession>
<evidence type="ECO:0000250" key="1"/>
<evidence type="ECO:0000250" key="2">
    <source>
        <dbReference type="UniProtKB" id="P07750"/>
    </source>
</evidence>
<evidence type="ECO:0000255" key="3"/>
<evidence type="ECO:0000305" key="4"/>